<feature type="chain" id="PRO_0000219415" description="Merlin">
    <location>
        <begin position="1" status="less than"/>
        <end position="586"/>
    </location>
</feature>
<feature type="domain" description="FERM" evidence="3">
    <location>
        <begin position="18"/>
        <end position="307"/>
    </location>
</feature>
<feature type="region of interest" description="Disordered" evidence="4">
    <location>
        <begin position="325"/>
        <end position="354"/>
    </location>
</feature>
<feature type="region of interest" description="Disordered" evidence="4">
    <location>
        <begin position="557"/>
        <end position="586"/>
    </location>
</feature>
<feature type="modified residue" description="Phosphoserine" evidence="2">
    <location>
        <position position="9"/>
    </location>
</feature>
<feature type="modified residue" description="Phosphoserine; by PAK" evidence="2">
    <location>
        <position position="514"/>
    </location>
</feature>
<feature type="non-terminal residue">
    <location>
        <position position="1"/>
    </location>
</feature>
<sequence>IASRMSFSSLKRKQPKTFTVRIVTMDAEMEFNCEMKWKGKDLFDLVCRTLGLRETWFFGLQYTIKDTVAWLKMDKKVLDHDVSKEEPVTFHFLAKFYPENAEEELVQEITQHLFFLQVKKQILDEKVYCPPEASVLLASYAVQAKYGDYDPSVHKRGFLAQEELLPKRVINLYQMTPEMWEERITAWYAEHRGRARDEAEMEYLKIAQDLEMYGVNYFTIRNKKGTELLLGVDALGLHIYDPENRLTPKISFPWNEIRNISYSDKEFTIKPLDKKIDVFKFNSSKLRVNKLILQLCIGNHDLFMRRRKADSLEVQQMKAQAREEKARKQMERQRLAREKQMREEAERSRDEPERRVLHMKEEATMANEALMRSEETADLLAEKAQITEEEAKLLAQKAAEAEQEMQRIKATAIRTEEEKRLMEQKVLEAEVLALKMAEESERRAKEADQLKQDLQEAREAERRAKQKLLEIATKPTYPPMNPIPAPLPPDIPSFDIIGDSLSFDFKDTDMKRLSMEIEKEKVEYMEKSKHLQEQLNELKTEIEALKLKERETALDILHSEHSDSGTSSKHNTIKKPQAQGRRPICI</sequence>
<reference key="1">
    <citation type="journal article" date="1997" name="Mol. Carcinog.">
        <title>Characterization of the rat neurofibromatosis 2 gene and its involvement in asbestos-induced mesothelioma.</title>
        <authorList>
            <person name="Kleymenova E.V."/>
            <person name="Bianchi A.A."/>
            <person name="Kley N."/>
            <person name="Pylev L.N."/>
            <person name="Walker C.L."/>
        </authorList>
    </citation>
    <scope>NUCLEOTIDE SEQUENCE [MRNA]</scope>
    <source>
        <strain>Fischer</strain>
        <tissue>Heart</tissue>
        <tissue>Liver</tissue>
    </source>
</reference>
<gene>
    <name type="primary">Nf2</name>
</gene>
<comment type="function">
    <text evidence="2">Probable regulator of the Hippo/SWH (Sav/Wts/Hpo) signaling pathway, a signaling pathway that plays a pivotal role in tumor suppression by restricting proliferation and promoting apoptosis. Along with WWC1 can synergistically induce the phosphorylation of LATS1 and LATS2 and can probably function in the regulation of the Hippo/SWH (Sav/Wts/Hpo) signaling pathway. May act as a membrane stabilizing protein. May inhibit PI3 kinase by binding to AGAP2 and impairing its stimulating activity. Suppresses cell proliferation and tumorigenesis by inhibiting the CUL4A-RBX1-DDB1-VprBP/DCAF1 E3 ubiquitin-protein ligase complex Plays a role in lens development and is required for complete fiber cell terminal differentiation, maintenance of cell polarity and separation of the lens vesicle from the corneal epithelium.</text>
</comment>
<comment type="subunit">
    <text evidence="2">Interacts with NHERF1, HGS and AGAP2. Interacts with SGSM3. Interacts (via FERM domain) with MPP1. Interacts with LAYN and WWC1. Interacts with the CUL4A-RBX1-DDB1-VprBP/DCAF1 E3 ubiquitin-protein ligase complex. The unphosphorylated form interacts (via FERM domain) with VPRBP/DCAF1. Interacts (via FERM domain) with NOP53; the interaction is direct. Interacts with SCHIP1; the interaction is direct.</text>
</comment>
<comment type="interaction">
    <interactant intactId="EBI-1013682">
        <id>Q63648</id>
    </interactant>
    <interactant intactId="EBI-34580239">
        <id>A0A0G2JX94</id>
        <label>Amot</label>
    </interactant>
    <organismsDiffer>false</organismsDiffer>
    <experiments>4</experiments>
</comment>
<comment type="subcellular location">
    <subcellularLocation>
        <location evidence="1">Cell membrane</location>
        <topology evidence="1">Peripheral membrane protein</topology>
        <orientation evidence="1">Cytoplasmic side</orientation>
    </subcellularLocation>
    <subcellularLocation>
        <location evidence="1">Cell projection</location>
    </subcellularLocation>
    <subcellularLocation>
        <location evidence="1">Cytoplasm</location>
        <location evidence="1">Cytoskeleton</location>
    </subcellularLocation>
    <subcellularLocation>
        <location evidence="1">Nucleus</location>
    </subcellularLocation>
    <text evidence="1">Colocalizes with MPP1 in non-myelin-forming Schwann cells. Binds with DCAF1 in the nucleus. The intramolecular association of the FERM domain with the C-terminal tail promotes nuclear accumulation. The unphosphorylated form accumulates predominantly in the nucleus while the phosphorylated form is largely confined to the non-nuclear fractions (By similarity).</text>
</comment>
<comment type="PTM">
    <text evidence="1">Ubiquitinated by the CUL4A-RBX1-DDB1-DCAF1/VprBP E3 ubiquitin-protein ligase complex for ubiquitination and subsequent proteasome-dependent degradation.</text>
</comment>
<comment type="PTM">
    <text evidence="2">Phosphorylation of Ser-514 inhibits nuclear localization by disrupting the intramolecular association of the FERM domain with the C-terminal tail. The dephosphorylation of Ser-514 favors the interaction with NOP53.</text>
</comment>
<protein>
    <recommendedName>
        <fullName>Merlin</fullName>
    </recommendedName>
    <alternativeName>
        <fullName>Moesin-ezrin-radixin-like protein</fullName>
    </alternativeName>
    <alternativeName>
        <fullName>Neurofibromin-2</fullName>
    </alternativeName>
    <alternativeName>
        <fullName>Schwannomin</fullName>
    </alternativeName>
</protein>
<proteinExistence type="evidence at protein level"/>
<name>MERL_RAT</name>
<organism>
    <name type="scientific">Rattus norvegicus</name>
    <name type="common">Rat</name>
    <dbReference type="NCBI Taxonomy" id="10116"/>
    <lineage>
        <taxon>Eukaryota</taxon>
        <taxon>Metazoa</taxon>
        <taxon>Chordata</taxon>
        <taxon>Craniata</taxon>
        <taxon>Vertebrata</taxon>
        <taxon>Euteleostomi</taxon>
        <taxon>Mammalia</taxon>
        <taxon>Eutheria</taxon>
        <taxon>Euarchontoglires</taxon>
        <taxon>Glires</taxon>
        <taxon>Rodentia</taxon>
        <taxon>Myomorpha</taxon>
        <taxon>Muroidea</taxon>
        <taxon>Muridae</taxon>
        <taxon>Murinae</taxon>
        <taxon>Rattus</taxon>
    </lineage>
</organism>
<keyword id="KW-1003">Cell membrane</keyword>
<keyword id="KW-0966">Cell projection</keyword>
<keyword id="KW-0963">Cytoplasm</keyword>
<keyword id="KW-0206">Cytoskeleton</keyword>
<keyword id="KW-0472">Membrane</keyword>
<keyword id="KW-0539">Nucleus</keyword>
<keyword id="KW-0597">Phosphoprotein</keyword>
<keyword id="KW-1185">Reference proteome</keyword>
<keyword id="KW-0043">Tumor suppressor</keyword>
<keyword id="KW-0832">Ubl conjugation</keyword>
<dbReference type="EMBL" id="U61772">
    <property type="protein sequence ID" value="AAC13318.1"/>
    <property type="molecule type" value="mRNA"/>
</dbReference>
<dbReference type="RefSeq" id="NP_037325.1">
    <property type="nucleotide sequence ID" value="NM_013193.1"/>
</dbReference>
<dbReference type="SMR" id="Q63648"/>
<dbReference type="CORUM" id="Q63648"/>
<dbReference type="FunCoup" id="Q63648">
    <property type="interactions" value="1802"/>
</dbReference>
<dbReference type="IntAct" id="Q63648">
    <property type="interactions" value="3"/>
</dbReference>
<dbReference type="STRING" id="10116.ENSRNOP00000010690"/>
<dbReference type="iPTMnet" id="Q63648"/>
<dbReference type="PhosphoSitePlus" id="Q63648"/>
<dbReference type="PaxDb" id="10116-ENSRNOP00000010690"/>
<dbReference type="GeneID" id="25744"/>
<dbReference type="KEGG" id="rno:25744"/>
<dbReference type="UCSC" id="RGD:3169">
    <property type="organism name" value="rat"/>
</dbReference>
<dbReference type="AGR" id="RGD:3169"/>
<dbReference type="CTD" id="4771"/>
<dbReference type="RGD" id="3169">
    <property type="gene designation" value="Nf2"/>
</dbReference>
<dbReference type="eggNOG" id="KOG3529">
    <property type="taxonomic scope" value="Eukaryota"/>
</dbReference>
<dbReference type="InParanoid" id="Q63648"/>
<dbReference type="OrthoDB" id="6018897at2759"/>
<dbReference type="PhylomeDB" id="Q63648"/>
<dbReference type="Reactome" id="R-RNO-2029482">
    <property type="pathway name" value="Regulation of actin dynamics for phagocytic cup formation"/>
</dbReference>
<dbReference type="Reactome" id="R-RNO-5627123">
    <property type="pathway name" value="RHO GTPases activate PAKs"/>
</dbReference>
<dbReference type="Proteomes" id="UP000002494">
    <property type="component" value="Unplaced"/>
</dbReference>
<dbReference type="GO" id="GO:0005912">
    <property type="term" value="C:adherens junction"/>
    <property type="evidence" value="ECO:0000266"/>
    <property type="project" value="RGD"/>
</dbReference>
<dbReference type="GO" id="GO:0045177">
    <property type="term" value="C:apical part of cell"/>
    <property type="evidence" value="ECO:0000266"/>
    <property type="project" value="RGD"/>
</dbReference>
<dbReference type="GO" id="GO:0044297">
    <property type="term" value="C:cell body"/>
    <property type="evidence" value="ECO:0000266"/>
    <property type="project" value="RGD"/>
</dbReference>
<dbReference type="GO" id="GO:0032154">
    <property type="term" value="C:cleavage furrow"/>
    <property type="evidence" value="ECO:0000266"/>
    <property type="project" value="RGD"/>
</dbReference>
<dbReference type="GO" id="GO:0030864">
    <property type="term" value="C:cortical actin cytoskeleton"/>
    <property type="evidence" value="ECO:0000266"/>
    <property type="project" value="RGD"/>
</dbReference>
<dbReference type="GO" id="GO:0005737">
    <property type="term" value="C:cytoplasm"/>
    <property type="evidence" value="ECO:0000266"/>
    <property type="project" value="RGD"/>
</dbReference>
<dbReference type="GO" id="GO:0005856">
    <property type="term" value="C:cytoskeleton"/>
    <property type="evidence" value="ECO:0000266"/>
    <property type="project" value="RGD"/>
</dbReference>
<dbReference type="GO" id="GO:0005769">
    <property type="term" value="C:early endosome"/>
    <property type="evidence" value="ECO:0000266"/>
    <property type="project" value="RGD"/>
</dbReference>
<dbReference type="GO" id="GO:0030175">
    <property type="term" value="C:filopodium"/>
    <property type="evidence" value="ECO:0000266"/>
    <property type="project" value="RGD"/>
</dbReference>
<dbReference type="GO" id="GO:0030027">
    <property type="term" value="C:lamellipodium"/>
    <property type="evidence" value="ECO:0000266"/>
    <property type="project" value="RGD"/>
</dbReference>
<dbReference type="GO" id="GO:0043005">
    <property type="term" value="C:neuron projection"/>
    <property type="evidence" value="ECO:0000266"/>
    <property type="project" value="RGD"/>
</dbReference>
<dbReference type="GO" id="GO:0005730">
    <property type="term" value="C:nucleolus"/>
    <property type="evidence" value="ECO:0000266"/>
    <property type="project" value="RGD"/>
</dbReference>
<dbReference type="GO" id="GO:0005634">
    <property type="term" value="C:nucleus"/>
    <property type="evidence" value="ECO:0000266"/>
    <property type="project" value="RGD"/>
</dbReference>
<dbReference type="GO" id="GO:0048471">
    <property type="term" value="C:perinuclear region of cytoplasm"/>
    <property type="evidence" value="ECO:0000314"/>
    <property type="project" value="RGD"/>
</dbReference>
<dbReference type="GO" id="GO:0005886">
    <property type="term" value="C:plasma membrane"/>
    <property type="evidence" value="ECO:0000318"/>
    <property type="project" value="GO_Central"/>
</dbReference>
<dbReference type="GO" id="GO:0032991">
    <property type="term" value="C:protein-containing complex"/>
    <property type="evidence" value="ECO:0000314"/>
    <property type="project" value="RGD"/>
</dbReference>
<dbReference type="GO" id="GO:0001726">
    <property type="term" value="C:ruffle"/>
    <property type="evidence" value="ECO:0000266"/>
    <property type="project" value="RGD"/>
</dbReference>
<dbReference type="GO" id="GO:0003779">
    <property type="term" value="F:actin binding"/>
    <property type="evidence" value="ECO:0000318"/>
    <property type="project" value="GO_Central"/>
</dbReference>
<dbReference type="GO" id="GO:0008013">
    <property type="term" value="F:beta-catenin binding"/>
    <property type="evidence" value="ECO:0000353"/>
    <property type="project" value="RGD"/>
</dbReference>
<dbReference type="GO" id="GO:0005178">
    <property type="term" value="F:integrin binding"/>
    <property type="evidence" value="ECO:0000353"/>
    <property type="project" value="RGD"/>
</dbReference>
<dbReference type="GO" id="GO:0019904">
    <property type="term" value="F:protein domain specific binding"/>
    <property type="evidence" value="ECO:0000353"/>
    <property type="project" value="RGD"/>
</dbReference>
<dbReference type="GO" id="GO:0030036">
    <property type="term" value="P:actin cytoskeleton organization"/>
    <property type="evidence" value="ECO:0000266"/>
    <property type="project" value="RGD"/>
</dbReference>
<dbReference type="GO" id="GO:0007420">
    <property type="term" value="P:brain development"/>
    <property type="evidence" value="ECO:0000266"/>
    <property type="project" value="RGD"/>
</dbReference>
<dbReference type="GO" id="GO:0045216">
    <property type="term" value="P:cell-cell junction organization"/>
    <property type="evidence" value="ECO:0000266"/>
    <property type="project" value="RGD"/>
</dbReference>
<dbReference type="GO" id="GO:0007398">
    <property type="term" value="P:ectoderm development"/>
    <property type="evidence" value="ECO:0000266"/>
    <property type="project" value="RGD"/>
</dbReference>
<dbReference type="GO" id="GO:0021766">
    <property type="term" value="P:hippocampus development"/>
    <property type="evidence" value="ECO:0000266"/>
    <property type="project" value="RGD"/>
</dbReference>
<dbReference type="GO" id="GO:0070306">
    <property type="term" value="P:lens fiber cell differentiation"/>
    <property type="evidence" value="ECO:0000266"/>
    <property type="project" value="RGD"/>
</dbReference>
<dbReference type="GO" id="GO:0000165">
    <property type="term" value="P:MAPK cascade"/>
    <property type="evidence" value="ECO:0000266"/>
    <property type="project" value="RGD"/>
</dbReference>
<dbReference type="GO" id="GO:0001707">
    <property type="term" value="P:mesoderm formation"/>
    <property type="evidence" value="ECO:0000266"/>
    <property type="project" value="RGD"/>
</dbReference>
<dbReference type="GO" id="GO:0030308">
    <property type="term" value="P:negative regulation of cell growth"/>
    <property type="evidence" value="ECO:0000314"/>
    <property type="project" value="RGD"/>
</dbReference>
<dbReference type="GO" id="GO:0008285">
    <property type="term" value="P:negative regulation of cell population proliferation"/>
    <property type="evidence" value="ECO:0000266"/>
    <property type="project" value="RGD"/>
</dbReference>
<dbReference type="GO" id="GO:0022408">
    <property type="term" value="P:negative regulation of cell-cell adhesion"/>
    <property type="evidence" value="ECO:0000266"/>
    <property type="project" value="RGD"/>
</dbReference>
<dbReference type="GO" id="GO:0043409">
    <property type="term" value="P:negative regulation of MAPK cascade"/>
    <property type="evidence" value="ECO:0000266"/>
    <property type="project" value="RGD"/>
</dbReference>
<dbReference type="GO" id="GO:0033689">
    <property type="term" value="P:negative regulation of osteoblast proliferation"/>
    <property type="evidence" value="ECO:0000266"/>
    <property type="project" value="RGD"/>
</dbReference>
<dbReference type="GO" id="GO:0046426">
    <property type="term" value="P:negative regulation of receptor signaling pathway via JAK-STAT"/>
    <property type="evidence" value="ECO:0000266"/>
    <property type="project" value="RGD"/>
</dbReference>
<dbReference type="GO" id="GO:0010626">
    <property type="term" value="P:negative regulation of Schwann cell proliferation"/>
    <property type="evidence" value="ECO:0000266"/>
    <property type="project" value="RGD"/>
</dbReference>
<dbReference type="GO" id="GO:0042475">
    <property type="term" value="P:odontogenesis of dentin-containing tooth"/>
    <property type="evidence" value="ECO:0000266"/>
    <property type="project" value="RGD"/>
</dbReference>
<dbReference type="GO" id="GO:0033687">
    <property type="term" value="P:osteoblast proliferation"/>
    <property type="evidence" value="ECO:0000266"/>
    <property type="project" value="RGD"/>
</dbReference>
<dbReference type="GO" id="GO:0045597">
    <property type="term" value="P:positive regulation of cell differentiation"/>
    <property type="evidence" value="ECO:0000266"/>
    <property type="project" value="RGD"/>
</dbReference>
<dbReference type="GO" id="GO:2000643">
    <property type="term" value="P:positive regulation of early endosome to late endosome transport"/>
    <property type="evidence" value="ECO:0000318"/>
    <property type="project" value="GO_Central"/>
</dbReference>
<dbReference type="GO" id="GO:1902966">
    <property type="term" value="P:positive regulation of protein localization to early endosome"/>
    <property type="evidence" value="ECO:0000318"/>
    <property type="project" value="GO_Central"/>
</dbReference>
<dbReference type="GO" id="GO:0051496">
    <property type="term" value="P:positive regulation of stress fiber assembly"/>
    <property type="evidence" value="ECO:0000266"/>
    <property type="project" value="RGD"/>
</dbReference>
<dbReference type="GO" id="GO:0042981">
    <property type="term" value="P:regulation of apoptotic process"/>
    <property type="evidence" value="ECO:0000250"/>
    <property type="project" value="UniProtKB"/>
</dbReference>
<dbReference type="GO" id="GO:0051726">
    <property type="term" value="P:regulation of cell cycle"/>
    <property type="evidence" value="ECO:0000250"/>
    <property type="project" value="UniProtKB"/>
</dbReference>
<dbReference type="GO" id="GO:0042127">
    <property type="term" value="P:regulation of cell population proliferation"/>
    <property type="evidence" value="ECO:0000266"/>
    <property type="project" value="RGD"/>
</dbReference>
<dbReference type="GO" id="GO:0008360">
    <property type="term" value="P:regulation of cell shape"/>
    <property type="evidence" value="ECO:0000318"/>
    <property type="project" value="GO_Central"/>
</dbReference>
<dbReference type="GO" id="GO:0014013">
    <property type="term" value="P:regulation of gliogenesis"/>
    <property type="evidence" value="ECO:0000266"/>
    <property type="project" value="RGD"/>
</dbReference>
<dbReference type="GO" id="GO:0035330">
    <property type="term" value="P:regulation of hippo signaling"/>
    <property type="evidence" value="ECO:0000266"/>
    <property type="project" value="RGD"/>
</dbReference>
<dbReference type="GO" id="GO:2000177">
    <property type="term" value="P:regulation of neural precursor cell proliferation"/>
    <property type="evidence" value="ECO:0000266"/>
    <property type="project" value="RGD"/>
</dbReference>
<dbReference type="GO" id="GO:0050767">
    <property type="term" value="P:regulation of neurogenesis"/>
    <property type="evidence" value="ECO:0000266"/>
    <property type="project" value="RGD"/>
</dbReference>
<dbReference type="GO" id="GO:1902115">
    <property type="term" value="P:regulation of organelle assembly"/>
    <property type="evidence" value="ECO:0000318"/>
    <property type="project" value="GO_Central"/>
</dbReference>
<dbReference type="GO" id="GO:1900180">
    <property type="term" value="P:regulation of protein localization to nucleus"/>
    <property type="evidence" value="ECO:0000266"/>
    <property type="project" value="RGD"/>
</dbReference>
<dbReference type="GO" id="GO:0031647">
    <property type="term" value="P:regulation of protein stability"/>
    <property type="evidence" value="ECO:0000266"/>
    <property type="project" value="RGD"/>
</dbReference>
<dbReference type="GO" id="GO:0072091">
    <property type="term" value="P:regulation of stem cell proliferation"/>
    <property type="evidence" value="ECO:0000266"/>
    <property type="project" value="RGD"/>
</dbReference>
<dbReference type="GO" id="GO:0014010">
    <property type="term" value="P:Schwann cell proliferation"/>
    <property type="evidence" value="ECO:0000266"/>
    <property type="project" value="RGD"/>
</dbReference>
<dbReference type="CDD" id="cd14473">
    <property type="entry name" value="FERM_B-lobe"/>
    <property type="match status" value="1"/>
</dbReference>
<dbReference type="CDD" id="cd13194">
    <property type="entry name" value="FERM_C_ERM"/>
    <property type="match status" value="1"/>
</dbReference>
<dbReference type="CDD" id="cd17186">
    <property type="entry name" value="FERM_F1_Merlin"/>
    <property type="match status" value="1"/>
</dbReference>
<dbReference type="FunFam" id="3.10.20.90:FF:000103">
    <property type="entry name" value="Merlin isoform 2"/>
    <property type="match status" value="1"/>
</dbReference>
<dbReference type="FunFam" id="2.30.29.30:FF:000003">
    <property type="entry name" value="Radixin isoform 1"/>
    <property type="match status" value="1"/>
</dbReference>
<dbReference type="FunFam" id="1.20.80.10:FF:000002">
    <property type="entry name" value="radixin isoform X1"/>
    <property type="match status" value="1"/>
</dbReference>
<dbReference type="FunFam" id="1.20.5.450:FF:000001">
    <property type="entry name" value="radixin isoform X2"/>
    <property type="match status" value="1"/>
</dbReference>
<dbReference type="Gene3D" id="1.20.5.450">
    <property type="match status" value="1"/>
</dbReference>
<dbReference type="Gene3D" id="1.20.80.10">
    <property type="match status" value="1"/>
</dbReference>
<dbReference type="Gene3D" id="6.10.360.10">
    <property type="match status" value="1"/>
</dbReference>
<dbReference type="Gene3D" id="3.10.20.90">
    <property type="entry name" value="Phosphatidylinositol 3-kinase Catalytic Subunit, Chain A, domain 1"/>
    <property type="match status" value="1"/>
</dbReference>
<dbReference type="Gene3D" id="2.30.29.30">
    <property type="entry name" value="Pleckstrin-homology domain (PH domain)/Phosphotyrosine-binding domain (PTB)"/>
    <property type="match status" value="1"/>
</dbReference>
<dbReference type="InterPro" id="IPR019749">
    <property type="entry name" value="Band_41_domain"/>
</dbReference>
<dbReference type="InterPro" id="IPR011174">
    <property type="entry name" value="ERM"/>
</dbReference>
<dbReference type="InterPro" id="IPR011259">
    <property type="entry name" value="ERM_C_dom"/>
</dbReference>
<dbReference type="InterPro" id="IPR041789">
    <property type="entry name" value="ERM_FERM_C"/>
</dbReference>
<dbReference type="InterPro" id="IPR046810">
    <property type="entry name" value="ERM_helical"/>
</dbReference>
<dbReference type="InterPro" id="IPR000798">
    <property type="entry name" value="Ez/rad/moesin-like"/>
</dbReference>
<dbReference type="InterPro" id="IPR014352">
    <property type="entry name" value="FERM/acyl-CoA-bd_prot_sf"/>
</dbReference>
<dbReference type="InterPro" id="IPR035963">
    <property type="entry name" value="FERM_2"/>
</dbReference>
<dbReference type="InterPro" id="IPR019748">
    <property type="entry name" value="FERM_central"/>
</dbReference>
<dbReference type="InterPro" id="IPR019747">
    <property type="entry name" value="FERM_CS"/>
</dbReference>
<dbReference type="InterPro" id="IPR000299">
    <property type="entry name" value="FERM_domain"/>
</dbReference>
<dbReference type="InterPro" id="IPR018979">
    <property type="entry name" value="FERM_N"/>
</dbReference>
<dbReference type="InterPro" id="IPR018980">
    <property type="entry name" value="FERM_PH-like_C"/>
</dbReference>
<dbReference type="InterPro" id="IPR008954">
    <property type="entry name" value="Moesin_tail_sf"/>
</dbReference>
<dbReference type="InterPro" id="IPR011993">
    <property type="entry name" value="PH-like_dom_sf"/>
</dbReference>
<dbReference type="InterPro" id="IPR029071">
    <property type="entry name" value="Ubiquitin-like_domsf"/>
</dbReference>
<dbReference type="PANTHER" id="PTHR23281">
    <property type="entry name" value="MERLIN/MOESIN/EZRIN/RADIXIN"/>
    <property type="match status" value="1"/>
</dbReference>
<dbReference type="Pfam" id="PF00769">
    <property type="entry name" value="ERM_C"/>
    <property type="match status" value="1"/>
</dbReference>
<dbReference type="Pfam" id="PF20492">
    <property type="entry name" value="ERM_helical"/>
    <property type="match status" value="1"/>
</dbReference>
<dbReference type="Pfam" id="PF09380">
    <property type="entry name" value="FERM_C"/>
    <property type="match status" value="1"/>
</dbReference>
<dbReference type="Pfam" id="PF00373">
    <property type="entry name" value="FERM_M"/>
    <property type="match status" value="1"/>
</dbReference>
<dbReference type="Pfam" id="PF09379">
    <property type="entry name" value="FERM_N"/>
    <property type="match status" value="1"/>
</dbReference>
<dbReference type="PIRSF" id="PIRSF002305">
    <property type="entry name" value="ERM"/>
    <property type="match status" value="1"/>
</dbReference>
<dbReference type="PRINTS" id="PR00935">
    <property type="entry name" value="BAND41"/>
</dbReference>
<dbReference type="PRINTS" id="PR00661">
    <property type="entry name" value="ERMFAMILY"/>
</dbReference>
<dbReference type="SMART" id="SM00295">
    <property type="entry name" value="B41"/>
    <property type="match status" value="1"/>
</dbReference>
<dbReference type="SMART" id="SM01196">
    <property type="entry name" value="FERM_C"/>
    <property type="match status" value="1"/>
</dbReference>
<dbReference type="SUPFAM" id="SSF48678">
    <property type="entry name" value="Moesin tail domain"/>
    <property type="match status" value="1"/>
</dbReference>
<dbReference type="SUPFAM" id="SSF50729">
    <property type="entry name" value="PH domain-like"/>
    <property type="match status" value="1"/>
</dbReference>
<dbReference type="SUPFAM" id="SSF47031">
    <property type="entry name" value="Second domain of FERM"/>
    <property type="match status" value="1"/>
</dbReference>
<dbReference type="SUPFAM" id="SSF54236">
    <property type="entry name" value="Ubiquitin-like"/>
    <property type="match status" value="1"/>
</dbReference>
<dbReference type="PROSITE" id="PS00660">
    <property type="entry name" value="FERM_1"/>
    <property type="match status" value="1"/>
</dbReference>
<dbReference type="PROSITE" id="PS00661">
    <property type="entry name" value="FERM_2"/>
    <property type="match status" value="1"/>
</dbReference>
<dbReference type="PROSITE" id="PS50057">
    <property type="entry name" value="FERM_3"/>
    <property type="match status" value="1"/>
</dbReference>
<evidence type="ECO:0000250" key="1"/>
<evidence type="ECO:0000250" key="2">
    <source>
        <dbReference type="UniProtKB" id="P35240"/>
    </source>
</evidence>
<evidence type="ECO:0000255" key="3">
    <source>
        <dbReference type="PROSITE-ProRule" id="PRU00084"/>
    </source>
</evidence>
<evidence type="ECO:0000256" key="4">
    <source>
        <dbReference type="SAM" id="MobiDB-lite"/>
    </source>
</evidence>
<accession>Q63648</accession>